<accession>C4XLX8</accession>
<feature type="chain" id="PRO_1000214601" description="Large ribosomal subunit protein uL22">
    <location>
        <begin position="1"/>
        <end position="110"/>
    </location>
</feature>
<dbReference type="EMBL" id="AP010904">
    <property type="protein sequence ID" value="BAH74716.1"/>
    <property type="molecule type" value="Genomic_DNA"/>
</dbReference>
<dbReference type="RefSeq" id="WP_006920472.1">
    <property type="nucleotide sequence ID" value="NC_012796.1"/>
</dbReference>
<dbReference type="SMR" id="C4XLX8"/>
<dbReference type="STRING" id="573370.DMR_12250"/>
<dbReference type="KEGG" id="dma:DMR_12250"/>
<dbReference type="eggNOG" id="COG0091">
    <property type="taxonomic scope" value="Bacteria"/>
</dbReference>
<dbReference type="HOGENOM" id="CLU_083987_3_3_7"/>
<dbReference type="OrthoDB" id="9805969at2"/>
<dbReference type="Proteomes" id="UP000009071">
    <property type="component" value="Chromosome"/>
</dbReference>
<dbReference type="GO" id="GO:0022625">
    <property type="term" value="C:cytosolic large ribosomal subunit"/>
    <property type="evidence" value="ECO:0007669"/>
    <property type="project" value="TreeGrafter"/>
</dbReference>
<dbReference type="GO" id="GO:0019843">
    <property type="term" value="F:rRNA binding"/>
    <property type="evidence" value="ECO:0007669"/>
    <property type="project" value="UniProtKB-UniRule"/>
</dbReference>
<dbReference type="GO" id="GO:0003735">
    <property type="term" value="F:structural constituent of ribosome"/>
    <property type="evidence" value="ECO:0007669"/>
    <property type="project" value="InterPro"/>
</dbReference>
<dbReference type="GO" id="GO:0006412">
    <property type="term" value="P:translation"/>
    <property type="evidence" value="ECO:0007669"/>
    <property type="project" value="UniProtKB-UniRule"/>
</dbReference>
<dbReference type="CDD" id="cd00336">
    <property type="entry name" value="Ribosomal_L22"/>
    <property type="match status" value="1"/>
</dbReference>
<dbReference type="Gene3D" id="3.90.470.10">
    <property type="entry name" value="Ribosomal protein L22/L17"/>
    <property type="match status" value="1"/>
</dbReference>
<dbReference type="HAMAP" id="MF_01331_B">
    <property type="entry name" value="Ribosomal_uL22_B"/>
    <property type="match status" value="1"/>
</dbReference>
<dbReference type="InterPro" id="IPR001063">
    <property type="entry name" value="Ribosomal_uL22"/>
</dbReference>
<dbReference type="InterPro" id="IPR005727">
    <property type="entry name" value="Ribosomal_uL22_bac/chlpt-type"/>
</dbReference>
<dbReference type="InterPro" id="IPR047867">
    <property type="entry name" value="Ribosomal_uL22_bac/org-type"/>
</dbReference>
<dbReference type="InterPro" id="IPR018260">
    <property type="entry name" value="Ribosomal_uL22_CS"/>
</dbReference>
<dbReference type="InterPro" id="IPR036394">
    <property type="entry name" value="Ribosomal_uL22_sf"/>
</dbReference>
<dbReference type="NCBIfam" id="TIGR01044">
    <property type="entry name" value="rplV_bact"/>
    <property type="match status" value="1"/>
</dbReference>
<dbReference type="PANTHER" id="PTHR13501">
    <property type="entry name" value="CHLOROPLAST 50S RIBOSOMAL PROTEIN L22-RELATED"/>
    <property type="match status" value="1"/>
</dbReference>
<dbReference type="PANTHER" id="PTHR13501:SF8">
    <property type="entry name" value="LARGE RIBOSOMAL SUBUNIT PROTEIN UL22M"/>
    <property type="match status" value="1"/>
</dbReference>
<dbReference type="Pfam" id="PF00237">
    <property type="entry name" value="Ribosomal_L22"/>
    <property type="match status" value="1"/>
</dbReference>
<dbReference type="SUPFAM" id="SSF54843">
    <property type="entry name" value="Ribosomal protein L22"/>
    <property type="match status" value="1"/>
</dbReference>
<dbReference type="PROSITE" id="PS00464">
    <property type="entry name" value="RIBOSOMAL_L22"/>
    <property type="match status" value="1"/>
</dbReference>
<comment type="function">
    <text evidence="1">This protein binds specifically to 23S rRNA; its binding is stimulated by other ribosomal proteins, e.g. L4, L17, and L20. It is important during the early stages of 50S assembly. It makes multiple contacts with different domains of the 23S rRNA in the assembled 50S subunit and ribosome (By similarity).</text>
</comment>
<comment type="function">
    <text evidence="1">The globular domain of the protein is located near the polypeptide exit tunnel on the outside of the subunit, while an extended beta-hairpin is found that lines the wall of the exit tunnel in the center of the 70S ribosome.</text>
</comment>
<comment type="subunit">
    <text evidence="1">Part of the 50S ribosomal subunit.</text>
</comment>
<comment type="similarity">
    <text evidence="1">Belongs to the universal ribosomal protein uL22 family.</text>
</comment>
<reference key="1">
    <citation type="journal article" date="2009" name="Genome Res.">
        <title>Whole genome sequence of Desulfovibrio magneticus strain RS-1 revealed common gene clusters in magnetotactic bacteria.</title>
        <authorList>
            <person name="Nakazawa H."/>
            <person name="Arakaki A."/>
            <person name="Narita-Yamada S."/>
            <person name="Yashiro I."/>
            <person name="Jinno K."/>
            <person name="Aoki N."/>
            <person name="Tsuruyama A."/>
            <person name="Okamura Y."/>
            <person name="Tanikawa S."/>
            <person name="Fujita N."/>
            <person name="Takeyama H."/>
            <person name="Matsunaga T."/>
        </authorList>
    </citation>
    <scope>NUCLEOTIDE SEQUENCE [LARGE SCALE GENOMIC DNA]</scope>
    <source>
        <strain>ATCC 700980 / DSM 13731 / RS-1</strain>
    </source>
</reference>
<keyword id="KW-0687">Ribonucleoprotein</keyword>
<keyword id="KW-0689">Ribosomal protein</keyword>
<keyword id="KW-0694">RNA-binding</keyword>
<keyword id="KW-0699">rRNA-binding</keyword>
<evidence type="ECO:0000255" key="1">
    <source>
        <dbReference type="HAMAP-Rule" id="MF_01331"/>
    </source>
</evidence>
<evidence type="ECO:0000305" key="2"/>
<sequence>MEAKAIAKYIRLSPQKARLVAANILGRPVEEAMNILKFTPKKSAKIIGKVLHSAVANAEQISGVDIDNLTVKQVIINPGPTHKRIMTRSMGRAFRIVKRTSHITVVVAEN</sequence>
<gene>
    <name evidence="1" type="primary">rplV</name>
    <name type="ordered locus">DMR_12250</name>
</gene>
<proteinExistence type="inferred from homology"/>
<name>RL22_SOLM1</name>
<organism>
    <name type="scientific">Solidesulfovibrio magneticus (strain ATCC 700980 / DSM 13731 / RS-1)</name>
    <name type="common">Desulfovibrio magneticus</name>
    <dbReference type="NCBI Taxonomy" id="573370"/>
    <lineage>
        <taxon>Bacteria</taxon>
        <taxon>Pseudomonadati</taxon>
        <taxon>Thermodesulfobacteriota</taxon>
        <taxon>Desulfovibrionia</taxon>
        <taxon>Desulfovibrionales</taxon>
        <taxon>Desulfovibrionaceae</taxon>
        <taxon>Solidesulfovibrio</taxon>
    </lineage>
</organism>
<protein>
    <recommendedName>
        <fullName evidence="1">Large ribosomal subunit protein uL22</fullName>
    </recommendedName>
    <alternativeName>
        <fullName evidence="2">50S ribosomal protein L22</fullName>
    </alternativeName>
</protein>